<accession>P0AGM6</accession>
<accession>P20101</accession>
<accession>P76020</accession>
<accession>Q9R325</accession>
<dbReference type="EMBL" id="AE005174">
    <property type="protein sequence ID" value="AAG56072.1"/>
    <property type="molecule type" value="Genomic_DNA"/>
</dbReference>
<dbReference type="EMBL" id="BA000007">
    <property type="protein sequence ID" value="BAB35142.1"/>
    <property type="molecule type" value="Genomic_DNA"/>
</dbReference>
<dbReference type="PIR" id="D85701">
    <property type="entry name" value="D85701"/>
</dbReference>
<dbReference type="PIR" id="G90843">
    <property type="entry name" value="G90843"/>
</dbReference>
<dbReference type="RefSeq" id="NP_309746.1">
    <property type="nucleotide sequence ID" value="NC_002695.1"/>
</dbReference>
<dbReference type="RefSeq" id="WP_001257044.1">
    <property type="nucleotide sequence ID" value="NZ_VOAI01000038.1"/>
</dbReference>
<dbReference type="SMR" id="P0AGM6"/>
<dbReference type="STRING" id="155864.Z1985"/>
<dbReference type="GeneID" id="913142"/>
<dbReference type="GeneID" id="93775279"/>
<dbReference type="KEGG" id="ece:Z1985"/>
<dbReference type="KEGG" id="ecs:ECs_1719"/>
<dbReference type="PATRIC" id="fig|386585.9.peg.1817"/>
<dbReference type="eggNOG" id="COG2912">
    <property type="taxonomic scope" value="Bacteria"/>
</dbReference>
<dbReference type="HOGENOM" id="CLU_063810_0_0_6"/>
<dbReference type="OMA" id="WIAAEHD"/>
<dbReference type="Proteomes" id="UP000000558">
    <property type="component" value="Chromosome"/>
</dbReference>
<dbReference type="Proteomes" id="UP000002519">
    <property type="component" value="Chromosome"/>
</dbReference>
<dbReference type="InterPro" id="IPR032698">
    <property type="entry name" value="SirB1_N"/>
</dbReference>
<dbReference type="NCBIfam" id="NF008188">
    <property type="entry name" value="PRK10941.1"/>
    <property type="match status" value="1"/>
</dbReference>
<dbReference type="PANTHER" id="PTHR31350:SF21">
    <property type="entry name" value="F-BOX ONLY PROTEIN 21"/>
    <property type="match status" value="1"/>
</dbReference>
<dbReference type="PANTHER" id="PTHR31350">
    <property type="entry name" value="SI:DKEY-261L7.2"/>
    <property type="match status" value="1"/>
</dbReference>
<dbReference type="Pfam" id="PF13371">
    <property type="entry name" value="TPR_9"/>
    <property type="match status" value="1"/>
</dbReference>
<dbReference type="Pfam" id="PF13369">
    <property type="entry name" value="Transglut_core2"/>
    <property type="match status" value="1"/>
</dbReference>
<evidence type="ECO:0000305" key="1"/>
<reference key="1">
    <citation type="journal article" date="2001" name="Nature">
        <title>Genome sequence of enterohaemorrhagic Escherichia coli O157:H7.</title>
        <authorList>
            <person name="Perna N.T."/>
            <person name="Plunkett G. III"/>
            <person name="Burland V."/>
            <person name="Mau B."/>
            <person name="Glasner J.D."/>
            <person name="Rose D.J."/>
            <person name="Mayhew G.F."/>
            <person name="Evans P.S."/>
            <person name="Gregor J."/>
            <person name="Kirkpatrick H.A."/>
            <person name="Posfai G."/>
            <person name="Hackett J."/>
            <person name="Klink S."/>
            <person name="Boutin A."/>
            <person name="Shao Y."/>
            <person name="Miller L."/>
            <person name="Grotbeck E.J."/>
            <person name="Davis N.W."/>
            <person name="Lim A."/>
            <person name="Dimalanta E.T."/>
            <person name="Potamousis K."/>
            <person name="Apodaca J."/>
            <person name="Anantharaman T.S."/>
            <person name="Lin J."/>
            <person name="Yen G."/>
            <person name="Schwartz D.C."/>
            <person name="Welch R.A."/>
            <person name="Blattner F.R."/>
        </authorList>
    </citation>
    <scope>NUCLEOTIDE SEQUENCE [LARGE SCALE GENOMIC DNA]</scope>
    <source>
        <strain>O157:H7 / EDL933 / ATCC 700927 / EHEC</strain>
    </source>
</reference>
<reference key="2">
    <citation type="journal article" date="2001" name="DNA Res.">
        <title>Complete genome sequence of enterohemorrhagic Escherichia coli O157:H7 and genomic comparison with a laboratory strain K-12.</title>
        <authorList>
            <person name="Hayashi T."/>
            <person name="Makino K."/>
            <person name="Ohnishi M."/>
            <person name="Kurokawa K."/>
            <person name="Ishii K."/>
            <person name="Yokoyama K."/>
            <person name="Han C.-G."/>
            <person name="Ohtsubo E."/>
            <person name="Nakayama K."/>
            <person name="Murata T."/>
            <person name="Tanaka M."/>
            <person name="Tobe T."/>
            <person name="Iida T."/>
            <person name="Takami H."/>
            <person name="Honda T."/>
            <person name="Sasakawa C."/>
            <person name="Ogasawara N."/>
            <person name="Yasunaga T."/>
            <person name="Kuhara S."/>
            <person name="Shiba T."/>
            <person name="Hattori M."/>
            <person name="Shinagawa H."/>
        </authorList>
    </citation>
    <scope>NUCLEOTIDE SEQUENCE [LARGE SCALE GENOMIC DNA]</scope>
    <source>
        <strain>O157:H7 / Sakai / RIMD 0509952 / EHEC</strain>
    </source>
</reference>
<organism>
    <name type="scientific">Escherichia coli O157:H7</name>
    <dbReference type="NCBI Taxonomy" id="83334"/>
    <lineage>
        <taxon>Bacteria</taxon>
        <taxon>Pseudomonadati</taxon>
        <taxon>Pseudomonadota</taxon>
        <taxon>Gammaproteobacteria</taxon>
        <taxon>Enterobacterales</taxon>
        <taxon>Enterobacteriaceae</taxon>
        <taxon>Escherichia</taxon>
    </lineage>
</organism>
<keyword id="KW-1185">Reference proteome</keyword>
<proteinExistence type="inferred from homology"/>
<protein>
    <recommendedName>
        <fullName>UPF0162 protein YchA</fullName>
    </recommendedName>
    <alternativeName>
        <fullName>Protein SirB1</fullName>
    </alternativeName>
</protein>
<name>SIRB1_ECO57</name>
<comment type="similarity">
    <text evidence="1">Belongs to the UPF0162 family.</text>
</comment>
<gene>
    <name type="primary">ychA</name>
    <name type="synonym">sirB1</name>
    <name type="ordered locus">Z1985</name>
    <name type="ordered locus">ECs1719</name>
</gene>
<sequence>MRSLADFEFNKAPLCEGMILACEAIRRDFPSQDVYDELERLVSLAKEEISQLLPLEEQLEKLIALFYGDWGFKASRGVYRLSDALWLDQVLKNRQGSAVSLGAVLLWVANRLDLPLLPVIFPTQLILRIECPDGEIWLINPFNGESLSEHMLDVWLKGNISPSAELFYEDLDEADNIEVIRKLLDTLKASLMEENQMELALRTSEALLQFNPEDPYEIRDRGLIYAQLDCEHVALNDLSYFVEQCPEDPISEMIRAQINNIAHKHIVLH</sequence>
<feature type="chain" id="PRO_0000202378" description="UPF0162 protein YchA">
    <location>
        <begin position="1"/>
        <end position="269"/>
    </location>
</feature>